<comment type="function">
    <text evidence="1">Forms an efflux pump with AaeB.</text>
</comment>
<comment type="subcellular location">
    <subcellularLocation>
        <location evidence="1">Cell inner membrane</location>
        <topology evidence="1">Single-pass membrane protein</topology>
    </subcellularLocation>
</comment>
<comment type="induction">
    <text evidence="1">Positively coregulated with aaeB and aaeX by AaeR.</text>
</comment>
<comment type="similarity">
    <text evidence="1">Belongs to the membrane fusion protein (MFP) (TC 8.A.1) family.</text>
</comment>
<feature type="chain" id="PRO_1000068803" description="p-hydroxybenzoic acid efflux pump subunit AaeA">
    <location>
        <begin position="1"/>
        <end position="310"/>
    </location>
</feature>
<feature type="transmembrane region" description="Helical" evidence="1">
    <location>
        <begin position="12"/>
        <end position="32"/>
    </location>
</feature>
<proteinExistence type="inferred from homology"/>
<accession>A8A550</accession>
<name>AAEA_ECOHS</name>
<gene>
    <name evidence="1" type="primary">aaeA</name>
    <name type="ordered locus">EcHS_A3430</name>
</gene>
<evidence type="ECO:0000255" key="1">
    <source>
        <dbReference type="HAMAP-Rule" id="MF_01544"/>
    </source>
</evidence>
<reference key="1">
    <citation type="journal article" date="2008" name="J. Bacteriol.">
        <title>The pangenome structure of Escherichia coli: comparative genomic analysis of E. coli commensal and pathogenic isolates.</title>
        <authorList>
            <person name="Rasko D.A."/>
            <person name="Rosovitz M.J."/>
            <person name="Myers G.S.A."/>
            <person name="Mongodin E.F."/>
            <person name="Fricke W.F."/>
            <person name="Gajer P."/>
            <person name="Crabtree J."/>
            <person name="Sebaihia M."/>
            <person name="Thomson N.R."/>
            <person name="Chaudhuri R."/>
            <person name="Henderson I.R."/>
            <person name="Sperandio V."/>
            <person name="Ravel J."/>
        </authorList>
    </citation>
    <scope>NUCLEOTIDE SEQUENCE [LARGE SCALE GENOMIC DNA]</scope>
    <source>
        <strain>HS</strain>
    </source>
</reference>
<keyword id="KW-0997">Cell inner membrane</keyword>
<keyword id="KW-1003">Cell membrane</keyword>
<keyword id="KW-0472">Membrane</keyword>
<keyword id="KW-0812">Transmembrane</keyword>
<keyword id="KW-1133">Transmembrane helix</keyword>
<keyword id="KW-0813">Transport</keyword>
<dbReference type="EMBL" id="CP000802">
    <property type="protein sequence ID" value="ABV07654.1"/>
    <property type="molecule type" value="Genomic_DNA"/>
</dbReference>
<dbReference type="RefSeq" id="WP_000854037.1">
    <property type="nucleotide sequence ID" value="NC_009800.1"/>
</dbReference>
<dbReference type="SMR" id="A8A550"/>
<dbReference type="KEGG" id="ecx:EcHS_A3430"/>
<dbReference type="HOGENOM" id="CLU_018816_15_2_6"/>
<dbReference type="GO" id="GO:0005886">
    <property type="term" value="C:plasma membrane"/>
    <property type="evidence" value="ECO:0007669"/>
    <property type="project" value="UniProtKB-SubCell"/>
</dbReference>
<dbReference type="GO" id="GO:0022857">
    <property type="term" value="F:transmembrane transporter activity"/>
    <property type="evidence" value="ECO:0007669"/>
    <property type="project" value="UniProtKB-UniRule"/>
</dbReference>
<dbReference type="FunFam" id="2.40.30.170:FF:000002">
    <property type="entry name" value="p-hydroxybenzoic acid efflux pump subunit AaeA"/>
    <property type="match status" value="1"/>
</dbReference>
<dbReference type="FunFam" id="2.40.50.100:FF:000018">
    <property type="entry name" value="p-hydroxybenzoic acid efflux pump subunit AaeA"/>
    <property type="match status" value="1"/>
</dbReference>
<dbReference type="Gene3D" id="2.40.30.170">
    <property type="match status" value="1"/>
</dbReference>
<dbReference type="Gene3D" id="2.40.50.100">
    <property type="match status" value="1"/>
</dbReference>
<dbReference type="HAMAP" id="MF_01544">
    <property type="entry name" value="AaeA"/>
    <property type="match status" value="1"/>
</dbReference>
<dbReference type="InterPro" id="IPR043602">
    <property type="entry name" value="CusB-like_dom_1"/>
</dbReference>
<dbReference type="InterPro" id="IPR032317">
    <property type="entry name" value="CusB_D23"/>
</dbReference>
<dbReference type="InterPro" id="IPR050393">
    <property type="entry name" value="MFP_Efflux_Pump"/>
</dbReference>
<dbReference type="InterPro" id="IPR022871">
    <property type="entry name" value="PHBA_efflux_pump_AaeA"/>
</dbReference>
<dbReference type="InterPro" id="IPR006143">
    <property type="entry name" value="RND_pump_MFP"/>
</dbReference>
<dbReference type="NCBIfam" id="NF007850">
    <property type="entry name" value="PRK10559.1"/>
    <property type="match status" value="1"/>
</dbReference>
<dbReference type="NCBIfam" id="TIGR01730">
    <property type="entry name" value="RND_mfp"/>
    <property type="match status" value="1"/>
</dbReference>
<dbReference type="PANTHER" id="PTHR30367:SF12">
    <property type="entry name" value="P-HYDROXYBENZOIC ACID EFFLUX PUMP SUBUNIT AAEA"/>
    <property type="match status" value="1"/>
</dbReference>
<dbReference type="PANTHER" id="PTHR30367">
    <property type="entry name" value="P-HYDROXYBENZOIC ACID EFFLUX PUMP SUBUNIT AAEA-RELATED"/>
    <property type="match status" value="1"/>
</dbReference>
<dbReference type="Pfam" id="PF00529">
    <property type="entry name" value="CusB_dom_1"/>
    <property type="match status" value="1"/>
</dbReference>
<dbReference type="Pfam" id="PF16576">
    <property type="entry name" value="HlyD_D23"/>
    <property type="match status" value="1"/>
</dbReference>
<dbReference type="SUPFAM" id="SSF111369">
    <property type="entry name" value="HlyD-like secretion proteins"/>
    <property type="match status" value="1"/>
</dbReference>
<protein>
    <recommendedName>
        <fullName evidence="1">p-hydroxybenzoic acid efflux pump subunit AaeA</fullName>
        <shortName evidence="1">pHBA efflux pump protein A</shortName>
    </recommendedName>
</protein>
<sequence>MKTLIRKFSRTAITVVLVILAFIAIFNAWVYYTESPWTRDARFSADVVAIAPDVSGLITQVNVHDNQLVKKGQVLFTIDQPRYQKALEEAQADVAYYQVLAQEKRQEAGRRNRLGVQAMSREEIDQANNVLQTVLHQLAKAQATRDLAKLDLERTVIRAPVDGWVTNLNVYTGEFITRGSTAVALVKQNSFYVLAYMEETKLEGVRPGYRAEITPLGSNKVLKGTVDSVAAGVTNASSTRDDKGMATIDSNLEWVRLAQRVPVRIRLDNQQENIWPAGTTATVVVTGKQDRDESQDSFFRKMAHRLREFG</sequence>
<organism>
    <name type="scientific">Escherichia coli O9:H4 (strain HS)</name>
    <dbReference type="NCBI Taxonomy" id="331112"/>
    <lineage>
        <taxon>Bacteria</taxon>
        <taxon>Pseudomonadati</taxon>
        <taxon>Pseudomonadota</taxon>
        <taxon>Gammaproteobacteria</taxon>
        <taxon>Enterobacterales</taxon>
        <taxon>Enterobacteriaceae</taxon>
        <taxon>Escherichia</taxon>
    </lineage>
</organism>